<evidence type="ECO:0000250" key="1"/>
<evidence type="ECO:0000250" key="2">
    <source>
        <dbReference type="UniProtKB" id="P38935"/>
    </source>
</evidence>
<evidence type="ECO:0000250" key="3">
    <source>
        <dbReference type="UniProtKB" id="Q92900"/>
    </source>
</evidence>
<evidence type="ECO:0000250" key="4">
    <source>
        <dbReference type="UniProtKB" id="Q9EQN5"/>
    </source>
</evidence>
<evidence type="ECO:0000255" key="5"/>
<evidence type="ECO:0000255" key="6">
    <source>
        <dbReference type="PROSITE-ProRule" id="PRU00382"/>
    </source>
</evidence>
<evidence type="ECO:0000255" key="7">
    <source>
        <dbReference type="PROSITE-ProRule" id="PRU00449"/>
    </source>
</evidence>
<evidence type="ECO:0000255" key="8">
    <source>
        <dbReference type="PROSITE-ProRule" id="PRU00499"/>
    </source>
</evidence>
<evidence type="ECO:0000256" key="9">
    <source>
        <dbReference type="SAM" id="MobiDB-lite"/>
    </source>
</evidence>
<evidence type="ECO:0000269" key="10">
    <source>
    </source>
</evidence>
<evidence type="ECO:0000269" key="11">
    <source>
    </source>
</evidence>
<evidence type="ECO:0000269" key="12">
    <source>
    </source>
</evidence>
<evidence type="ECO:0000269" key="13">
    <source>
    </source>
</evidence>
<evidence type="ECO:0000303" key="14">
    <source>
    </source>
</evidence>
<evidence type="ECO:0000305" key="15"/>
<evidence type="ECO:0000305" key="16">
    <source>
    </source>
</evidence>
<evidence type="ECO:0007744" key="17">
    <source>
    </source>
</evidence>
<feature type="initiator methionine" description="Removed" evidence="2">
    <location>
        <position position="1"/>
    </location>
</feature>
<feature type="chain" id="PRO_0000080703" description="DNA-binding protein SMUBP-2">
    <location>
        <begin position="2"/>
        <end position="993"/>
    </location>
</feature>
<feature type="domain" description="R3H" evidence="6">
    <location>
        <begin position="721"/>
        <end position="784"/>
    </location>
</feature>
<feature type="zinc finger region" description="AN1-type; degenerate" evidence="7">
    <location>
        <begin position="889"/>
        <end position="938"/>
    </location>
</feature>
<feature type="region of interest" description="SS DNA-binding" evidence="1">
    <location>
        <begin position="637"/>
        <end position="783"/>
    </location>
</feature>
<feature type="region of interest" description="Disordered" evidence="9">
    <location>
        <begin position="650"/>
        <end position="723"/>
    </location>
</feature>
<feature type="region of interest" description="Disordered" evidence="9">
    <location>
        <begin position="765"/>
        <end position="815"/>
    </location>
</feature>
<feature type="region of interest" description="Disordered" evidence="9">
    <location>
        <begin position="837"/>
        <end position="872"/>
    </location>
</feature>
<feature type="region of interest" description="Disordered" evidence="9">
    <location>
        <begin position="953"/>
        <end position="993"/>
    </location>
</feature>
<feature type="short sequence motif" description="Nuclear localization signal" evidence="5">
    <location>
        <begin position="862"/>
        <end position="866"/>
    </location>
</feature>
<feature type="compositionally biased region" description="Polar residues" evidence="9">
    <location>
        <begin position="667"/>
        <end position="683"/>
    </location>
</feature>
<feature type="compositionally biased region" description="Polar residues" evidence="9">
    <location>
        <begin position="703"/>
        <end position="716"/>
    </location>
</feature>
<feature type="compositionally biased region" description="Basic and acidic residues" evidence="9">
    <location>
        <begin position="765"/>
        <end position="775"/>
    </location>
</feature>
<feature type="compositionally biased region" description="Low complexity" evidence="9">
    <location>
        <begin position="784"/>
        <end position="794"/>
    </location>
</feature>
<feature type="compositionally biased region" description="Polar residues" evidence="9">
    <location>
        <begin position="837"/>
        <end position="847"/>
    </location>
</feature>
<feature type="compositionally biased region" description="Basic and acidic residues" evidence="9">
    <location>
        <begin position="954"/>
        <end position="976"/>
    </location>
</feature>
<feature type="binding site" evidence="8">
    <location>
        <begin position="213"/>
        <end position="220"/>
    </location>
    <ligand>
        <name>ATP</name>
        <dbReference type="ChEBI" id="CHEBI:30616"/>
    </ligand>
</feature>
<feature type="binding site" evidence="3">
    <location>
        <position position="402"/>
    </location>
    <ligand>
        <name>ATP</name>
        <dbReference type="ChEBI" id="CHEBI:30616"/>
    </ligand>
</feature>
<feature type="binding site" evidence="3">
    <location>
        <position position="441"/>
    </location>
    <ligand>
        <name>ATP</name>
        <dbReference type="ChEBI" id="CHEBI:30616"/>
    </ligand>
</feature>
<feature type="binding site" evidence="3">
    <location>
        <position position="570"/>
    </location>
    <ligand>
        <name>ATP</name>
        <dbReference type="ChEBI" id="CHEBI:30616"/>
    </ligand>
</feature>
<feature type="binding site" evidence="7">
    <location>
        <position position="911"/>
    </location>
    <ligand>
        <name>Zn(2+)</name>
        <dbReference type="ChEBI" id="CHEBI:29105"/>
    </ligand>
</feature>
<feature type="binding site" evidence="7">
    <location>
        <position position="914"/>
    </location>
    <ligand>
        <name>Zn(2+)</name>
        <dbReference type="ChEBI" id="CHEBI:29105"/>
    </ligand>
</feature>
<feature type="binding site" evidence="7">
    <location>
        <position position="928"/>
    </location>
    <ligand>
        <name>Zn(2+)</name>
        <dbReference type="ChEBI" id="CHEBI:29105"/>
    </ligand>
</feature>
<feature type="binding site" evidence="7">
    <location>
        <position position="930"/>
    </location>
    <ligand>
        <name>Zn(2+)</name>
        <dbReference type="ChEBI" id="CHEBI:29105"/>
    </ligand>
</feature>
<feature type="modified residue" description="N-acetylalanine" evidence="2">
    <location>
        <position position="2"/>
    </location>
</feature>
<feature type="modified residue" description="Phosphoserine" evidence="17">
    <location>
        <position position="797"/>
    </location>
</feature>
<feature type="modified residue" description="Phosphoserine" evidence="17">
    <location>
        <position position="800"/>
    </location>
</feature>
<name>SMBP2_MOUSE</name>
<protein>
    <recommendedName>
        <fullName evidence="14">DNA-binding protein SMUBP-2</fullName>
        <ecNumber evidence="2">3.6.4.12</ecNumber>
        <ecNumber evidence="16">3.6.4.13</ecNumber>
    </recommendedName>
    <alternativeName>
        <fullName>ATP-dependent helicase IGHMBP2</fullName>
    </alternativeName>
    <alternativeName>
        <fullName>Cardiac transcription factor 1</fullName>
        <shortName>CATF1</shortName>
    </alternativeName>
    <alternativeName>
        <fullName>Immunoglobulin mu-binding protein 2</fullName>
    </alternativeName>
</protein>
<dbReference type="EC" id="3.6.4.12" evidence="2"/>
<dbReference type="EC" id="3.6.4.13" evidence="16"/>
<dbReference type="EMBL" id="L10075">
    <property type="protein sequence ID" value="AAA40143.1"/>
    <property type="molecule type" value="mRNA"/>
</dbReference>
<dbReference type="CCDS" id="CCDS29393.1"/>
<dbReference type="PIR" id="S35633">
    <property type="entry name" value="S35633"/>
</dbReference>
<dbReference type="SMR" id="P40694"/>
<dbReference type="FunCoup" id="P40694">
    <property type="interactions" value="1438"/>
</dbReference>
<dbReference type="IntAct" id="P40694">
    <property type="interactions" value="1"/>
</dbReference>
<dbReference type="STRING" id="10090.ENSMUSP00000025751"/>
<dbReference type="GlyGen" id="P40694">
    <property type="glycosylation" value="1 site"/>
</dbReference>
<dbReference type="iPTMnet" id="P40694"/>
<dbReference type="PhosphoSitePlus" id="P40694"/>
<dbReference type="PaxDb" id="10090-ENSMUSP00000025751"/>
<dbReference type="PeptideAtlas" id="P40694"/>
<dbReference type="ProteomicsDB" id="257262"/>
<dbReference type="Pumba" id="P40694"/>
<dbReference type="UCSC" id="uc008fwa.1">
    <property type="organism name" value="mouse"/>
</dbReference>
<dbReference type="AGR" id="MGI:99954"/>
<dbReference type="MGI" id="MGI:99954">
    <property type="gene designation" value="Ighmbp2"/>
</dbReference>
<dbReference type="eggNOG" id="KOG1803">
    <property type="taxonomic scope" value="Eukaryota"/>
</dbReference>
<dbReference type="InParanoid" id="P40694"/>
<dbReference type="OrthoDB" id="6513042at2759"/>
<dbReference type="PhylomeDB" id="P40694"/>
<dbReference type="PRO" id="PR:P40694"/>
<dbReference type="Proteomes" id="UP000000589">
    <property type="component" value="Unplaced"/>
</dbReference>
<dbReference type="RNAct" id="P40694">
    <property type="molecule type" value="protein"/>
</dbReference>
<dbReference type="GO" id="GO:0030424">
    <property type="term" value="C:axon"/>
    <property type="evidence" value="ECO:0000314"/>
    <property type="project" value="UniProtKB"/>
</dbReference>
<dbReference type="GO" id="GO:0005737">
    <property type="term" value="C:cytoplasm"/>
    <property type="evidence" value="ECO:0000314"/>
    <property type="project" value="UniProtKB"/>
</dbReference>
<dbReference type="GO" id="GO:0030426">
    <property type="term" value="C:growth cone"/>
    <property type="evidence" value="ECO:0000314"/>
    <property type="project" value="UniProtKB"/>
</dbReference>
<dbReference type="GO" id="GO:0043025">
    <property type="term" value="C:neuronal cell body"/>
    <property type="evidence" value="ECO:0000314"/>
    <property type="project" value="MGI"/>
</dbReference>
<dbReference type="GO" id="GO:0005634">
    <property type="term" value="C:nucleus"/>
    <property type="evidence" value="ECO:0000314"/>
    <property type="project" value="UniProtKB"/>
</dbReference>
<dbReference type="GO" id="GO:0048471">
    <property type="term" value="C:perinuclear region of cytoplasm"/>
    <property type="evidence" value="ECO:0000314"/>
    <property type="project" value="UniProtKB"/>
</dbReference>
<dbReference type="GO" id="GO:1990904">
    <property type="term" value="C:ribonucleoprotein complex"/>
    <property type="evidence" value="ECO:0000314"/>
    <property type="project" value="UniProtKB"/>
</dbReference>
<dbReference type="GO" id="GO:0043139">
    <property type="term" value="F:5'-3' DNA helicase activity"/>
    <property type="evidence" value="ECO:0000250"/>
    <property type="project" value="UniProtKB"/>
</dbReference>
<dbReference type="GO" id="GO:0032574">
    <property type="term" value="F:5'-3' RNA helicase activity"/>
    <property type="evidence" value="ECO:0000250"/>
    <property type="project" value="UniProtKB"/>
</dbReference>
<dbReference type="GO" id="GO:0005524">
    <property type="term" value="F:ATP binding"/>
    <property type="evidence" value="ECO:0000250"/>
    <property type="project" value="UniProtKB"/>
</dbReference>
<dbReference type="GO" id="GO:0016887">
    <property type="term" value="F:ATP hydrolysis activity"/>
    <property type="evidence" value="ECO:0000314"/>
    <property type="project" value="UniProtKB"/>
</dbReference>
<dbReference type="GO" id="GO:0008094">
    <property type="term" value="F:ATP-dependent activity, acting on DNA"/>
    <property type="evidence" value="ECO:0000250"/>
    <property type="project" value="UniProtKB"/>
</dbReference>
<dbReference type="GO" id="GO:0008186">
    <property type="term" value="F:ATP-dependent activity, acting on RNA"/>
    <property type="evidence" value="ECO:0000250"/>
    <property type="project" value="UniProtKB"/>
</dbReference>
<dbReference type="GO" id="GO:0036121">
    <property type="term" value="F:double-stranded DNA helicase activity"/>
    <property type="evidence" value="ECO:0000250"/>
    <property type="project" value="UniProtKB"/>
</dbReference>
<dbReference type="GO" id="GO:1990955">
    <property type="term" value="F:G-rich single-stranded DNA binding"/>
    <property type="evidence" value="ECO:0000314"/>
    <property type="project" value="MGI"/>
</dbReference>
<dbReference type="GO" id="GO:0042802">
    <property type="term" value="F:identical protein binding"/>
    <property type="evidence" value="ECO:0000266"/>
    <property type="project" value="MGI"/>
</dbReference>
<dbReference type="GO" id="GO:0043022">
    <property type="term" value="F:ribosome binding"/>
    <property type="evidence" value="ECO:0000314"/>
    <property type="project" value="UniProtKB"/>
</dbReference>
<dbReference type="GO" id="GO:0003723">
    <property type="term" value="F:RNA binding"/>
    <property type="evidence" value="ECO:0000250"/>
    <property type="project" value="UniProtKB"/>
</dbReference>
<dbReference type="GO" id="GO:0003727">
    <property type="term" value="F:single-stranded RNA binding"/>
    <property type="evidence" value="ECO:0000314"/>
    <property type="project" value="UniProtKB"/>
</dbReference>
<dbReference type="GO" id="GO:0000049">
    <property type="term" value="F:tRNA binding"/>
    <property type="evidence" value="ECO:0000250"/>
    <property type="project" value="UniProtKB"/>
</dbReference>
<dbReference type="GO" id="GO:0008270">
    <property type="term" value="F:zinc ion binding"/>
    <property type="evidence" value="ECO:0007669"/>
    <property type="project" value="UniProtKB-KW"/>
</dbReference>
<dbReference type="GO" id="GO:0000122">
    <property type="term" value="P:negative regulation of transcription by RNA polymerase II"/>
    <property type="evidence" value="ECO:0000314"/>
    <property type="project" value="MGI"/>
</dbReference>
<dbReference type="GO" id="GO:0050905">
    <property type="term" value="P:neuromuscular process"/>
    <property type="evidence" value="ECO:0000315"/>
    <property type="project" value="MGI"/>
</dbReference>
<dbReference type="GO" id="GO:0021522">
    <property type="term" value="P:spinal cord motor neuron differentiation"/>
    <property type="evidence" value="ECO:0000315"/>
    <property type="project" value="MGI"/>
</dbReference>
<dbReference type="GO" id="GO:0006412">
    <property type="term" value="P:translation"/>
    <property type="evidence" value="ECO:0000303"/>
    <property type="project" value="UniProtKB"/>
</dbReference>
<dbReference type="CDD" id="cd18044">
    <property type="entry name" value="DEXXQc_SMUBP2"/>
    <property type="match status" value="1"/>
</dbReference>
<dbReference type="CDD" id="cd02641">
    <property type="entry name" value="R3H_Smubp-2_like"/>
    <property type="match status" value="1"/>
</dbReference>
<dbReference type="CDD" id="cd18808">
    <property type="entry name" value="SF1_C_Upf1"/>
    <property type="match status" value="1"/>
</dbReference>
<dbReference type="FunFam" id="3.40.50.300:FF:001171">
    <property type="entry name" value="DNA-binding protein SMUBP-2"/>
    <property type="match status" value="1"/>
</dbReference>
<dbReference type="FunFam" id="3.40.50.300:FF:001146">
    <property type="entry name" value="DNA-binding protein SMUBP-2 isoform X1"/>
    <property type="match status" value="1"/>
</dbReference>
<dbReference type="FunFam" id="2.40.30.270:FF:000001">
    <property type="entry name" value="Immunoglobulin mu DNA-binding protein 2"/>
    <property type="match status" value="1"/>
</dbReference>
<dbReference type="FunFam" id="3.30.1370.50:FF:000002">
    <property type="entry name" value="Immunoglobulin mu DNA-binding protein 2"/>
    <property type="match status" value="1"/>
</dbReference>
<dbReference type="FunFam" id="4.10.1110.10:FF:000002">
    <property type="entry name" value="Immunoglobulin mu DNA-binding protein 2"/>
    <property type="match status" value="1"/>
</dbReference>
<dbReference type="Gene3D" id="2.40.30.270">
    <property type="match status" value="1"/>
</dbReference>
<dbReference type="Gene3D" id="4.10.1110.10">
    <property type="entry name" value="AN1-like Zinc finger"/>
    <property type="match status" value="1"/>
</dbReference>
<dbReference type="Gene3D" id="3.40.50.300">
    <property type="entry name" value="P-loop containing nucleotide triphosphate hydrolases"/>
    <property type="match status" value="2"/>
</dbReference>
<dbReference type="Gene3D" id="3.30.1370.50">
    <property type="entry name" value="R3H-like domain"/>
    <property type="match status" value="1"/>
</dbReference>
<dbReference type="InterPro" id="IPR003593">
    <property type="entry name" value="AAA+_ATPase"/>
</dbReference>
<dbReference type="InterPro" id="IPR035896">
    <property type="entry name" value="AN1-like_Znf"/>
</dbReference>
<dbReference type="InterPro" id="IPR050534">
    <property type="entry name" value="Coronavir_polyprotein_1ab"/>
</dbReference>
<dbReference type="InterPro" id="IPR041679">
    <property type="entry name" value="DNA2/NAM7-like_C"/>
</dbReference>
<dbReference type="InterPro" id="IPR041677">
    <property type="entry name" value="DNA2/NAM7_AAA_11"/>
</dbReference>
<dbReference type="InterPro" id="IPR014001">
    <property type="entry name" value="Helicase_ATP-bd"/>
</dbReference>
<dbReference type="InterPro" id="IPR027417">
    <property type="entry name" value="P-loop_NTPase"/>
</dbReference>
<dbReference type="InterPro" id="IPR001374">
    <property type="entry name" value="R3H_dom"/>
</dbReference>
<dbReference type="InterPro" id="IPR036867">
    <property type="entry name" value="R3H_dom_sf"/>
</dbReference>
<dbReference type="InterPro" id="IPR034072">
    <property type="entry name" value="R3H_Smubp-2"/>
</dbReference>
<dbReference type="InterPro" id="IPR047187">
    <property type="entry name" value="SF1_C_Upf1"/>
</dbReference>
<dbReference type="InterPro" id="IPR004483">
    <property type="entry name" value="SMUBP-2/Hcs1-like"/>
</dbReference>
<dbReference type="InterPro" id="IPR048761">
    <property type="entry name" value="SMUBP-2_HCS1_1B"/>
</dbReference>
<dbReference type="InterPro" id="IPR000058">
    <property type="entry name" value="Znf_AN1"/>
</dbReference>
<dbReference type="NCBIfam" id="TIGR00376">
    <property type="entry name" value="IGHMBP2 family helicase"/>
    <property type="match status" value="1"/>
</dbReference>
<dbReference type="PANTHER" id="PTHR43788:SF8">
    <property type="entry name" value="DNA-BINDING PROTEIN SMUBP-2"/>
    <property type="match status" value="1"/>
</dbReference>
<dbReference type="PANTHER" id="PTHR43788">
    <property type="entry name" value="DNA2/NAM7 HELICASE FAMILY MEMBER"/>
    <property type="match status" value="1"/>
</dbReference>
<dbReference type="Pfam" id="PF13086">
    <property type="entry name" value="AAA_11"/>
    <property type="match status" value="1"/>
</dbReference>
<dbReference type="Pfam" id="PF13087">
    <property type="entry name" value="AAA_12"/>
    <property type="match status" value="1"/>
</dbReference>
<dbReference type="Pfam" id="PF01424">
    <property type="entry name" value="R3H"/>
    <property type="match status" value="1"/>
</dbReference>
<dbReference type="Pfam" id="PF21138">
    <property type="entry name" value="SMUBP-2_HCS1_1B"/>
    <property type="match status" value="1"/>
</dbReference>
<dbReference type="SMART" id="SM00382">
    <property type="entry name" value="AAA"/>
    <property type="match status" value="1"/>
</dbReference>
<dbReference type="SMART" id="SM00487">
    <property type="entry name" value="DEXDc"/>
    <property type="match status" value="1"/>
</dbReference>
<dbReference type="SMART" id="SM00393">
    <property type="entry name" value="R3H"/>
    <property type="match status" value="1"/>
</dbReference>
<dbReference type="SMART" id="SM00154">
    <property type="entry name" value="ZnF_AN1"/>
    <property type="match status" value="1"/>
</dbReference>
<dbReference type="SUPFAM" id="SSF118310">
    <property type="entry name" value="AN1-like Zinc finger"/>
    <property type="match status" value="1"/>
</dbReference>
<dbReference type="SUPFAM" id="SSF52540">
    <property type="entry name" value="P-loop containing nucleoside triphosphate hydrolases"/>
    <property type="match status" value="1"/>
</dbReference>
<dbReference type="SUPFAM" id="SSF82708">
    <property type="entry name" value="R3H domain"/>
    <property type="match status" value="1"/>
</dbReference>
<dbReference type="PROSITE" id="PS51061">
    <property type="entry name" value="R3H"/>
    <property type="match status" value="1"/>
</dbReference>
<dbReference type="PROSITE" id="PS51039">
    <property type="entry name" value="ZF_AN1"/>
    <property type="match status" value="1"/>
</dbReference>
<proteinExistence type="evidence at protein level"/>
<keyword id="KW-0007">Acetylation</keyword>
<keyword id="KW-0010">Activator</keyword>
<keyword id="KW-0067">ATP-binding</keyword>
<keyword id="KW-0966">Cell projection</keyword>
<keyword id="KW-0963">Cytoplasm</keyword>
<keyword id="KW-0238">DNA-binding</keyword>
<keyword id="KW-0347">Helicase</keyword>
<keyword id="KW-0378">Hydrolase</keyword>
<keyword id="KW-0479">Metal-binding</keyword>
<keyword id="KW-0547">Nucleotide-binding</keyword>
<keyword id="KW-0539">Nucleus</keyword>
<keyword id="KW-0597">Phosphoprotein</keyword>
<keyword id="KW-1185">Reference proteome</keyword>
<keyword id="KW-0687">Ribonucleoprotein</keyword>
<keyword id="KW-0694">RNA-binding</keyword>
<keyword id="KW-0804">Transcription</keyword>
<keyword id="KW-0805">Transcription regulation</keyword>
<keyword id="KW-0820">tRNA-binding</keyword>
<keyword id="KW-0862">Zinc</keyword>
<keyword id="KW-0863">Zinc-finger</keyword>
<reference key="1">
    <citation type="journal article" date="1993" name="Nucleic Acids Res.">
        <title>Isolation of cDNA encoding a binding protein specific to 5'-phosphorylated single-stranded DNA with G-rich sequences.</title>
        <authorList>
            <person name="Mizuta T.-R."/>
            <person name="Fukita Y."/>
            <person name="Miyoshi T."/>
            <person name="Shimizu A."/>
            <person name="Honjo T."/>
        </authorList>
    </citation>
    <scope>NUCLEOTIDE SEQUENCE [MRNA]</scope>
    <scope>DNA-BINDING</scope>
    <scope>TISSUE SPECIFICITY</scope>
    <source>
        <strain>BALB/cJ</strain>
        <tissue>Spleen</tissue>
    </source>
</reference>
<reference key="2">
    <citation type="journal article" date="2009" name="Hum. Mol. Genet.">
        <title>IGHMBP2 is a ribosome-associated helicase inactive in the neuromuscular disorder distal SMA type 1 (DSMA1).</title>
        <authorList>
            <person name="Guenther U.P."/>
            <person name="Handoko L."/>
            <person name="Laggerbauer B."/>
            <person name="Jablonka S."/>
            <person name="Chari A."/>
            <person name="Alzheimer M."/>
            <person name="Ohmer J."/>
            <person name="Ploettner O."/>
            <person name="Gehring N."/>
            <person name="Sickmann A."/>
            <person name="von Au K."/>
            <person name="Schuelke M."/>
            <person name="Fischer U."/>
        </authorList>
    </citation>
    <scope>FUNCTION</scope>
    <scope>SUBCELLULAR LOCATION</scope>
    <scope>INTERACTION WITH RIBOSOMES</scope>
</reference>
<reference key="3">
    <citation type="journal article" date="2009" name="Hum. Mol. Genet.">
        <title>Biochemical and genetic evidence for a role of IGHMBP2 in the translational machinery.</title>
        <authorList>
            <person name="de Planell-Saguer M."/>
            <person name="Schroeder D.G."/>
            <person name="Rodicio M.C."/>
            <person name="Cox G.A."/>
            <person name="Mourelatos Z."/>
        </authorList>
    </citation>
    <scope>FUNCTION</scope>
    <scope>SUBCELLULAR LOCATION</scope>
    <scope>TRNA-BINDING</scope>
</reference>
<reference key="4">
    <citation type="journal article" date="2010" name="Cell">
        <title>A tissue-specific atlas of mouse protein phosphorylation and expression.</title>
        <authorList>
            <person name="Huttlin E.L."/>
            <person name="Jedrychowski M.P."/>
            <person name="Elias J.E."/>
            <person name="Goswami T."/>
            <person name="Rad R."/>
            <person name="Beausoleil S.A."/>
            <person name="Villen J."/>
            <person name="Haas W."/>
            <person name="Sowa M.E."/>
            <person name="Gygi S.P."/>
        </authorList>
    </citation>
    <scope>PHOSPHORYLATION [LARGE SCALE ANALYSIS] AT SER-797 AND SER-800</scope>
    <scope>IDENTIFICATION BY MASS SPECTROMETRY [LARGE SCALE ANALYSIS]</scope>
    <source>
        <tissue>Lung</tissue>
        <tissue>Pancreas</tissue>
        <tissue>Spleen</tissue>
        <tissue>Testis</tissue>
    </source>
</reference>
<reference key="5">
    <citation type="journal article" date="2012" name="Nucleic Acids Res.">
        <title>The Ighmbp2 helicase structure reveals the molecular basis for disease-causing mutations in DMSA1.</title>
        <authorList>
            <person name="Lim S.C."/>
            <person name="Bowler M.W."/>
            <person name="Lai T.F."/>
            <person name="Song H."/>
        </authorList>
    </citation>
    <scope>FUNCTION</scope>
    <scope>CATALYTIC ACTIVITY</scope>
    <scope>DOMAIN</scope>
</reference>
<sequence>MASSTVESFVAQQLQLLELERDAEVEERRSWQEHSSLRELQSRGVCLLKLQVSSQRTGLYGQRLVTFEPRKFGPAVVLPSNSFTSGDIVGLYDTNENSQLATGVLTRITQKSVTVAFDESHDLQLNLDRENTYRLLKLANDVTYKRLKKALMTLKKYHSGPASSLIDILLGSSTPSPAMEIPPLSFYNTTLDLSQKEAVSFALAQKELAIIHGPPGTGKTTTVVEIILQAVKQGLKVLCCAPSNIAVDNLVERLALCKKRILRLGHPARLLESVQHHSLDAVLARSDNAQIVADIRRDIDQVFGKNKKTQDKREKGNFRSEIKLLRKELKEREEAAIVQSLTAADVVLATNTGASSDGPLKLLPEDYFDVVVVDECAQALEASCWIPLLKAPKCILAGDHRQLPPTTVSHRAALAGLSRSLMERLAEKHGAGVVRMLTVQYRMHQAIMCWASEAMYHGQFTSHPSVAGHLLKDLPGVTDTEETRVPLLLIDTAGCGLLELEEEDSQSKGNPGEVRLVTLHIQALVDAGVQAGDIAVIAPYNLQVDLLRQSLSNKHPELEIKSVDGFQGREKEAVLLTFVRSNRKGEVGFLAEDRRINVAVTRARRHVAVICDSHTVNNHAFLETLVDYFTEHGEVRTAFEYLDDIVPENYTHEGSQGHSRVPKPKCPSTSIRKPASDQESGQETRAAPRHGRRKPSEKPPGSHVQSQHSSSANGSDRTGGPDRTEHFRATIEEFVASKESQLEFPTSLSSHDRLRVHQLAEEFGLRHDSTGEGKARHITVSRRSPASSGSVAPQPSSPPSPAQAEPEPRAEEPVTVVQAHCPVQLDLKALHLERLQRQQSSQAQTAKGQPGGDSRPQKASQKKKKKEPKGPVMALPCEEDFDALVSAVVKADNTCSFSKCSVSTTTLGQFCMHCSHRYYLSHHLPEIHGCGEKARAHARQRISREGVLYAGSGTKDRALDPAKRAQLQRRLDKKLGELSSQRTSRKKEKERGT</sequence>
<organism>
    <name type="scientific">Mus musculus</name>
    <name type="common">Mouse</name>
    <dbReference type="NCBI Taxonomy" id="10090"/>
    <lineage>
        <taxon>Eukaryota</taxon>
        <taxon>Metazoa</taxon>
        <taxon>Chordata</taxon>
        <taxon>Craniata</taxon>
        <taxon>Vertebrata</taxon>
        <taxon>Euteleostomi</taxon>
        <taxon>Mammalia</taxon>
        <taxon>Eutheria</taxon>
        <taxon>Euarchontoglires</taxon>
        <taxon>Glires</taxon>
        <taxon>Rodentia</taxon>
        <taxon>Myomorpha</taxon>
        <taxon>Muroidea</taxon>
        <taxon>Muridae</taxon>
        <taxon>Murinae</taxon>
        <taxon>Mus</taxon>
        <taxon>Mus</taxon>
    </lineage>
</organism>
<comment type="function">
    <text evidence="4 10 11 12 13">5' to 3' helicase that unwinds RNA and DNA duplexes in an ATP-dependent reaction (PubMed:22965130, PubMed:8493094). Specific to 5'-phosphorylated single-stranded guanine-rich sequences (PubMed:8493094). May play a role in RNA metabolism, ribosome biogenesis or initiation of translation (PubMed:19158098, PubMed:19299493). May play a role in regulation of transcription (By similarity). Interacts with tRNA-Tyr (PubMed:19299493).</text>
</comment>
<comment type="catalytic activity">
    <reaction evidence="2">
        <text>ATP + H2O = ADP + phosphate + H(+)</text>
        <dbReference type="Rhea" id="RHEA:13065"/>
        <dbReference type="ChEBI" id="CHEBI:15377"/>
        <dbReference type="ChEBI" id="CHEBI:15378"/>
        <dbReference type="ChEBI" id="CHEBI:30616"/>
        <dbReference type="ChEBI" id="CHEBI:43474"/>
        <dbReference type="ChEBI" id="CHEBI:456216"/>
        <dbReference type="EC" id="3.6.4.12"/>
    </reaction>
    <physiologicalReaction direction="left-to-right" evidence="2">
        <dbReference type="Rhea" id="RHEA:13066"/>
    </physiologicalReaction>
</comment>
<comment type="catalytic activity">
    <reaction evidence="12">
        <text>ATP + H2O = ADP + phosphate + H(+)</text>
        <dbReference type="Rhea" id="RHEA:13065"/>
        <dbReference type="ChEBI" id="CHEBI:15377"/>
        <dbReference type="ChEBI" id="CHEBI:15378"/>
        <dbReference type="ChEBI" id="CHEBI:30616"/>
        <dbReference type="ChEBI" id="CHEBI:43474"/>
        <dbReference type="ChEBI" id="CHEBI:456216"/>
        <dbReference type="EC" id="3.6.4.13"/>
    </reaction>
    <physiologicalReaction direction="left-to-right" evidence="12">
        <dbReference type="Rhea" id="RHEA:13066"/>
    </physiologicalReaction>
</comment>
<comment type="subunit">
    <text evidence="2">Homooligomer (By similarity). Interacts with RUVBL1 (By similarity). Interacts with RUVBL2 (By similarity). Interacts with GTF3C1 (By similarity). Interacts with ABT1 (By similarity). Interacts with ribosomes (By similarity).</text>
</comment>
<comment type="subcellular location">
    <subcellularLocation>
        <location evidence="2">Nucleus</location>
    </subcellularLocation>
    <subcellularLocation>
        <location evidence="10">Cytoplasm</location>
    </subcellularLocation>
    <subcellularLocation>
        <location evidence="10">Cell projection</location>
        <location evidence="10">Axon</location>
    </subcellularLocation>
</comment>
<comment type="tissue specificity">
    <text evidence="13">In all tissues examined.</text>
</comment>
<comment type="domain">
    <text evidence="12">The R3H domain recognizes phosphorylated 5'-ends of single-stranded nucleic acids which promotes binding of nucleic acids and stimulates ATPase activity.</text>
</comment>
<comment type="similarity">
    <text evidence="15">Belongs to the DNA2/NAM7 helicase family.</text>
</comment>
<accession>P40694</accession>
<gene>
    <name type="primary">Ighmbp2</name>
    <name type="synonym">Smbp-2</name>
    <name type="synonym">Smbp2</name>
</gene>